<proteinExistence type="inferred from homology"/>
<dbReference type="EMBL" id="L77117">
    <property type="protein sequence ID" value="AAB98541.1"/>
    <property type="molecule type" value="Genomic_DNA"/>
</dbReference>
<dbReference type="PIR" id="E64368">
    <property type="entry name" value="E64368"/>
</dbReference>
<dbReference type="RefSeq" id="WP_010870053.1">
    <property type="nucleotide sequence ID" value="NC_000909.1"/>
</dbReference>
<dbReference type="SMR" id="Q57969"/>
<dbReference type="FunCoup" id="Q57969">
    <property type="interactions" value="1"/>
</dbReference>
<dbReference type="PaxDb" id="243232-MJ_0549"/>
<dbReference type="EnsemblBacteria" id="AAB98541">
    <property type="protein sequence ID" value="AAB98541"/>
    <property type="gene ID" value="MJ_0549"/>
</dbReference>
<dbReference type="GeneID" id="8804158"/>
<dbReference type="KEGG" id="mja:MJ_0549"/>
<dbReference type="eggNOG" id="arCOG01008">
    <property type="taxonomic scope" value="Archaea"/>
</dbReference>
<dbReference type="HOGENOM" id="CLU_113319_1_2_2"/>
<dbReference type="InParanoid" id="Q57969"/>
<dbReference type="OrthoDB" id="25654at2157"/>
<dbReference type="PhylomeDB" id="Q57969"/>
<dbReference type="Proteomes" id="UP000000805">
    <property type="component" value="Chromosome"/>
</dbReference>
<dbReference type="GO" id="GO:0003677">
    <property type="term" value="F:DNA binding"/>
    <property type="evidence" value="ECO:0000318"/>
    <property type="project" value="GO_Central"/>
</dbReference>
<dbReference type="GO" id="GO:0003700">
    <property type="term" value="F:DNA-binding transcription factor activity"/>
    <property type="evidence" value="ECO:0007669"/>
    <property type="project" value="UniProtKB-UniRule"/>
</dbReference>
<dbReference type="GO" id="GO:0016151">
    <property type="term" value="F:nickel cation binding"/>
    <property type="evidence" value="ECO:0007669"/>
    <property type="project" value="UniProtKB-UniRule"/>
</dbReference>
<dbReference type="GO" id="GO:0006355">
    <property type="term" value="P:regulation of DNA-templated transcription"/>
    <property type="evidence" value="ECO:0000318"/>
    <property type="project" value="GO_Central"/>
</dbReference>
<dbReference type="GO" id="GO:0010045">
    <property type="term" value="P:response to nickel cation"/>
    <property type="evidence" value="ECO:0007669"/>
    <property type="project" value="InterPro"/>
</dbReference>
<dbReference type="CDD" id="cd22231">
    <property type="entry name" value="RHH_NikR_HicB-like"/>
    <property type="match status" value="1"/>
</dbReference>
<dbReference type="Gene3D" id="3.30.70.1150">
    <property type="entry name" value="ACT-like. Chain A, domain 2"/>
    <property type="match status" value="1"/>
</dbReference>
<dbReference type="Gene3D" id="1.10.1220.10">
    <property type="entry name" value="Met repressor-like"/>
    <property type="match status" value="1"/>
</dbReference>
<dbReference type="HAMAP" id="MF_00476">
    <property type="entry name" value="NikR"/>
    <property type="match status" value="1"/>
</dbReference>
<dbReference type="InterPro" id="IPR027271">
    <property type="entry name" value="Acetolactate_synth/TF_NikR_C"/>
</dbReference>
<dbReference type="InterPro" id="IPR045865">
    <property type="entry name" value="ACT-like_dom_sf"/>
</dbReference>
<dbReference type="InterPro" id="IPR013321">
    <property type="entry name" value="Arc_rbn_hlx_hlx"/>
</dbReference>
<dbReference type="InterPro" id="IPR002145">
    <property type="entry name" value="CopG"/>
</dbReference>
<dbReference type="InterPro" id="IPR050192">
    <property type="entry name" value="CopG/NikR_regulator"/>
</dbReference>
<dbReference type="InterPro" id="IPR022988">
    <property type="entry name" value="Ni_resp_reg_NikR"/>
</dbReference>
<dbReference type="InterPro" id="IPR010985">
    <property type="entry name" value="Ribbon_hlx_hlx"/>
</dbReference>
<dbReference type="InterPro" id="IPR014864">
    <property type="entry name" value="TF_NikR_Ni-bd_C"/>
</dbReference>
<dbReference type="NCBIfam" id="NF001884">
    <property type="entry name" value="PRK00630.1"/>
    <property type="match status" value="1"/>
</dbReference>
<dbReference type="NCBIfam" id="NF002169">
    <property type="entry name" value="PRK01002.1"/>
    <property type="match status" value="1"/>
</dbReference>
<dbReference type="NCBIfam" id="NF002815">
    <property type="entry name" value="PRK02967.1"/>
    <property type="match status" value="1"/>
</dbReference>
<dbReference type="NCBIfam" id="NF003381">
    <property type="entry name" value="PRK04460.1"/>
    <property type="match status" value="1"/>
</dbReference>
<dbReference type="PANTHER" id="PTHR34719">
    <property type="entry name" value="NICKEL-RESPONSIVE REGULATOR"/>
    <property type="match status" value="1"/>
</dbReference>
<dbReference type="PANTHER" id="PTHR34719:SF2">
    <property type="entry name" value="NICKEL-RESPONSIVE REGULATOR"/>
    <property type="match status" value="1"/>
</dbReference>
<dbReference type="Pfam" id="PF08753">
    <property type="entry name" value="NikR_C"/>
    <property type="match status" value="1"/>
</dbReference>
<dbReference type="Pfam" id="PF01402">
    <property type="entry name" value="RHH_1"/>
    <property type="match status" value="1"/>
</dbReference>
<dbReference type="SUPFAM" id="SSF55021">
    <property type="entry name" value="ACT-like"/>
    <property type="match status" value="1"/>
</dbReference>
<dbReference type="SUPFAM" id="SSF47598">
    <property type="entry name" value="Ribbon-helix-helix"/>
    <property type="match status" value="1"/>
</dbReference>
<accession>Q57969</accession>
<organism>
    <name type="scientific">Methanocaldococcus jannaschii (strain ATCC 43067 / DSM 2661 / JAL-1 / JCM 10045 / NBRC 100440)</name>
    <name type="common">Methanococcus jannaschii</name>
    <dbReference type="NCBI Taxonomy" id="243232"/>
    <lineage>
        <taxon>Archaea</taxon>
        <taxon>Methanobacteriati</taxon>
        <taxon>Methanobacteriota</taxon>
        <taxon>Methanomada group</taxon>
        <taxon>Methanococci</taxon>
        <taxon>Methanococcales</taxon>
        <taxon>Methanocaldococcaceae</taxon>
        <taxon>Methanocaldococcus</taxon>
    </lineage>
</organism>
<comment type="function">
    <text evidence="1">Transcriptional regulator.</text>
</comment>
<comment type="cofactor">
    <cofactor evidence="1">
        <name>Ni(2+)</name>
        <dbReference type="ChEBI" id="CHEBI:49786"/>
    </cofactor>
    <text evidence="1">Binds 1 nickel ion per subunit.</text>
</comment>
<comment type="subunit">
    <text evidence="1">Homotetramer.</text>
</comment>
<comment type="similarity">
    <text evidence="1">Belongs to the transcriptional regulatory CopG/NikR family.</text>
</comment>
<feature type="chain" id="PRO_0000139302" description="Putative nickel-responsive regulator">
    <location>
        <begin position="1"/>
        <end position="141"/>
    </location>
</feature>
<feature type="binding site" evidence="1">
    <location>
        <position position="80"/>
    </location>
    <ligand>
        <name>Ni(2+)</name>
        <dbReference type="ChEBI" id="CHEBI:49786"/>
    </ligand>
</feature>
<feature type="binding site" evidence="1">
    <location>
        <position position="91"/>
    </location>
    <ligand>
        <name>Ni(2+)</name>
        <dbReference type="ChEBI" id="CHEBI:49786"/>
    </ligand>
</feature>
<feature type="binding site" evidence="1">
    <location>
        <position position="93"/>
    </location>
    <ligand>
        <name>Ni(2+)</name>
        <dbReference type="ChEBI" id="CHEBI:49786"/>
    </ligand>
</feature>
<feature type="binding site" evidence="1">
    <location>
        <position position="99"/>
    </location>
    <ligand>
        <name>Ni(2+)</name>
        <dbReference type="ChEBI" id="CHEBI:49786"/>
    </ligand>
</feature>
<gene>
    <name type="ordered locus">MJ0549</name>
</gene>
<name>NIKR_METJA</name>
<protein>
    <recommendedName>
        <fullName evidence="1">Putative nickel-responsive regulator</fullName>
    </recommendedName>
</protein>
<evidence type="ECO:0000255" key="1">
    <source>
        <dbReference type="HAMAP-Rule" id="MF_00476"/>
    </source>
</evidence>
<sequence length="141" mass="16133">MTEMDRISISLPSKLLREFDEIIAERGYASRSEAIRDAIRDYIIKHKWIHSLEGERAGSISVIYNHHASDVMEKITEIQHNYTDIIVATLHLHLDHDHCLETILVRGDAKRIRELTDRLTALKGVKQVKLSVMVPGGQIPE</sequence>
<reference key="1">
    <citation type="journal article" date="1996" name="Science">
        <title>Complete genome sequence of the methanogenic archaeon, Methanococcus jannaschii.</title>
        <authorList>
            <person name="Bult C.J."/>
            <person name="White O."/>
            <person name="Olsen G.J."/>
            <person name="Zhou L."/>
            <person name="Fleischmann R.D."/>
            <person name="Sutton G.G."/>
            <person name="Blake J.A."/>
            <person name="FitzGerald L.M."/>
            <person name="Clayton R.A."/>
            <person name="Gocayne J.D."/>
            <person name="Kerlavage A.R."/>
            <person name="Dougherty B.A."/>
            <person name="Tomb J.-F."/>
            <person name="Adams M.D."/>
            <person name="Reich C.I."/>
            <person name="Overbeek R."/>
            <person name="Kirkness E.F."/>
            <person name="Weinstock K.G."/>
            <person name="Merrick J.M."/>
            <person name="Glodek A."/>
            <person name="Scott J.L."/>
            <person name="Geoghagen N.S.M."/>
            <person name="Weidman J.F."/>
            <person name="Fuhrmann J.L."/>
            <person name="Nguyen D."/>
            <person name="Utterback T.R."/>
            <person name="Kelley J.M."/>
            <person name="Peterson J.D."/>
            <person name="Sadow P.W."/>
            <person name="Hanna M.C."/>
            <person name="Cotton M.D."/>
            <person name="Roberts K.M."/>
            <person name="Hurst M.A."/>
            <person name="Kaine B.P."/>
            <person name="Borodovsky M."/>
            <person name="Klenk H.-P."/>
            <person name="Fraser C.M."/>
            <person name="Smith H.O."/>
            <person name="Woese C.R."/>
            <person name="Venter J.C."/>
        </authorList>
    </citation>
    <scope>NUCLEOTIDE SEQUENCE [LARGE SCALE GENOMIC DNA]</scope>
    <source>
        <strain>ATCC 43067 / DSM 2661 / JAL-1 / JCM 10045 / NBRC 100440</strain>
    </source>
</reference>
<keyword id="KW-0238">DNA-binding</keyword>
<keyword id="KW-0479">Metal-binding</keyword>
<keyword id="KW-0533">Nickel</keyword>
<keyword id="KW-1185">Reference proteome</keyword>
<keyword id="KW-0804">Transcription</keyword>
<keyword id="KW-0805">Transcription regulation</keyword>